<feature type="chain" id="PRO_0000353607" description="Large ribosomal subunit protein uL3">
    <location>
        <begin position="1"/>
        <end position="218"/>
    </location>
</feature>
<feature type="region of interest" description="Disordered" evidence="2">
    <location>
        <begin position="137"/>
        <end position="157"/>
    </location>
</feature>
<protein>
    <recommendedName>
        <fullName evidence="1">Large ribosomal subunit protein uL3</fullName>
    </recommendedName>
    <alternativeName>
        <fullName evidence="3">50S ribosomal protein L3</fullName>
    </alternativeName>
</protein>
<sequence>MTTTFERQVKGLLGTKLGMTQVWDENGKFVPVTVVKADSNVVTQLRNTDKDGYNAVQIGFGAIDPRKVTKPLAGHFAAAGVTPRRHVVELRTSDAAEYELGQELSVELFEAGAKVDVVGTTKGKGTAGVMKRHGFSGVGASHGAHKNHRKPGSIGGASYPARVFKGMRMAGRMGNARHTTMNLTVHAVDAENSLLLIKGALPGPKGSVVLVRSTVKGA</sequence>
<keyword id="KW-1185">Reference proteome</keyword>
<keyword id="KW-0687">Ribonucleoprotein</keyword>
<keyword id="KW-0689">Ribosomal protein</keyword>
<keyword id="KW-0694">RNA-binding</keyword>
<keyword id="KW-0699">rRNA-binding</keyword>
<dbReference type="EMBL" id="AP009152">
    <property type="protein sequence ID" value="BAG28963.1"/>
    <property type="molecule type" value="Genomic_DNA"/>
</dbReference>
<dbReference type="RefSeq" id="WP_012397688.1">
    <property type="nucleotide sequence ID" value="NZ_VECX01000001.1"/>
</dbReference>
<dbReference type="SMR" id="B2GIL4"/>
<dbReference type="STRING" id="378753.KRH_06160"/>
<dbReference type="KEGG" id="krh:KRH_06160"/>
<dbReference type="eggNOG" id="COG0087">
    <property type="taxonomic scope" value="Bacteria"/>
</dbReference>
<dbReference type="HOGENOM" id="CLU_044142_4_1_11"/>
<dbReference type="OrthoDB" id="9806135at2"/>
<dbReference type="Proteomes" id="UP000008838">
    <property type="component" value="Chromosome"/>
</dbReference>
<dbReference type="GO" id="GO:0022625">
    <property type="term" value="C:cytosolic large ribosomal subunit"/>
    <property type="evidence" value="ECO:0007669"/>
    <property type="project" value="TreeGrafter"/>
</dbReference>
<dbReference type="GO" id="GO:0019843">
    <property type="term" value="F:rRNA binding"/>
    <property type="evidence" value="ECO:0007669"/>
    <property type="project" value="UniProtKB-UniRule"/>
</dbReference>
<dbReference type="GO" id="GO:0003735">
    <property type="term" value="F:structural constituent of ribosome"/>
    <property type="evidence" value="ECO:0007669"/>
    <property type="project" value="InterPro"/>
</dbReference>
<dbReference type="GO" id="GO:0006412">
    <property type="term" value="P:translation"/>
    <property type="evidence" value="ECO:0007669"/>
    <property type="project" value="UniProtKB-UniRule"/>
</dbReference>
<dbReference type="FunFam" id="2.40.30.10:FF:000004">
    <property type="entry name" value="50S ribosomal protein L3"/>
    <property type="match status" value="1"/>
</dbReference>
<dbReference type="FunFam" id="3.30.160.810:FF:000001">
    <property type="entry name" value="50S ribosomal protein L3"/>
    <property type="match status" value="1"/>
</dbReference>
<dbReference type="Gene3D" id="3.30.160.810">
    <property type="match status" value="1"/>
</dbReference>
<dbReference type="Gene3D" id="2.40.30.10">
    <property type="entry name" value="Translation factors"/>
    <property type="match status" value="1"/>
</dbReference>
<dbReference type="HAMAP" id="MF_01325_B">
    <property type="entry name" value="Ribosomal_uL3_B"/>
    <property type="match status" value="1"/>
</dbReference>
<dbReference type="InterPro" id="IPR000597">
    <property type="entry name" value="Ribosomal_uL3"/>
</dbReference>
<dbReference type="InterPro" id="IPR019927">
    <property type="entry name" value="Ribosomal_uL3_bac/org-type"/>
</dbReference>
<dbReference type="InterPro" id="IPR019926">
    <property type="entry name" value="Ribosomal_uL3_CS"/>
</dbReference>
<dbReference type="InterPro" id="IPR009000">
    <property type="entry name" value="Transl_B-barrel_sf"/>
</dbReference>
<dbReference type="NCBIfam" id="TIGR03625">
    <property type="entry name" value="L3_bact"/>
    <property type="match status" value="1"/>
</dbReference>
<dbReference type="PANTHER" id="PTHR11229">
    <property type="entry name" value="50S RIBOSOMAL PROTEIN L3"/>
    <property type="match status" value="1"/>
</dbReference>
<dbReference type="PANTHER" id="PTHR11229:SF16">
    <property type="entry name" value="LARGE RIBOSOMAL SUBUNIT PROTEIN UL3C"/>
    <property type="match status" value="1"/>
</dbReference>
<dbReference type="Pfam" id="PF00297">
    <property type="entry name" value="Ribosomal_L3"/>
    <property type="match status" value="1"/>
</dbReference>
<dbReference type="SUPFAM" id="SSF50447">
    <property type="entry name" value="Translation proteins"/>
    <property type="match status" value="1"/>
</dbReference>
<dbReference type="PROSITE" id="PS00474">
    <property type="entry name" value="RIBOSOMAL_L3"/>
    <property type="match status" value="1"/>
</dbReference>
<name>RL3_KOCRD</name>
<organism>
    <name type="scientific">Kocuria rhizophila (strain ATCC 9341 / DSM 348 / NBRC 103217 / DC2201)</name>
    <dbReference type="NCBI Taxonomy" id="378753"/>
    <lineage>
        <taxon>Bacteria</taxon>
        <taxon>Bacillati</taxon>
        <taxon>Actinomycetota</taxon>
        <taxon>Actinomycetes</taxon>
        <taxon>Micrococcales</taxon>
        <taxon>Micrococcaceae</taxon>
        <taxon>Kocuria</taxon>
    </lineage>
</organism>
<accession>B2GIL4</accession>
<evidence type="ECO:0000255" key="1">
    <source>
        <dbReference type="HAMAP-Rule" id="MF_01325"/>
    </source>
</evidence>
<evidence type="ECO:0000256" key="2">
    <source>
        <dbReference type="SAM" id="MobiDB-lite"/>
    </source>
</evidence>
<evidence type="ECO:0000305" key="3"/>
<gene>
    <name evidence="1" type="primary">rplC</name>
    <name type="ordered locus">KRH_06160</name>
</gene>
<comment type="function">
    <text evidence="1">One of the primary rRNA binding proteins, it binds directly near the 3'-end of the 23S rRNA, where it nucleates assembly of the 50S subunit.</text>
</comment>
<comment type="subunit">
    <text evidence="1">Part of the 50S ribosomal subunit. Forms a cluster with proteins L14 and L19.</text>
</comment>
<comment type="similarity">
    <text evidence="1">Belongs to the universal ribosomal protein uL3 family.</text>
</comment>
<reference key="1">
    <citation type="journal article" date="2008" name="J. Bacteriol.">
        <title>Complete genome sequence of the soil actinomycete Kocuria rhizophila.</title>
        <authorList>
            <person name="Takarada H."/>
            <person name="Sekine M."/>
            <person name="Kosugi H."/>
            <person name="Matsuo Y."/>
            <person name="Fujisawa T."/>
            <person name="Omata S."/>
            <person name="Kishi E."/>
            <person name="Shimizu A."/>
            <person name="Tsukatani N."/>
            <person name="Tanikawa S."/>
            <person name="Fujita N."/>
            <person name="Harayama S."/>
        </authorList>
    </citation>
    <scope>NUCLEOTIDE SEQUENCE [LARGE SCALE GENOMIC DNA]</scope>
    <source>
        <strain>ATCC 9341 / DSM 348 / NBRC 103217 / DC2201</strain>
    </source>
</reference>
<proteinExistence type="inferred from homology"/>